<name>AVLB1_WHEAT</name>
<reference key="1">
    <citation type="journal article" date="2006" name="J. Cereal Sci.">
        <title>Transcriptome analysis reveals differentially expressed storage protein transcripts in seeds of Aegilops and wheat.</title>
        <authorList>
            <person name="Kan Y."/>
            <person name="Wan Y."/>
            <person name="Beaudoin F."/>
            <person name="Leader D.J."/>
            <person name="Edwards K."/>
            <person name="Poole R."/>
            <person name="Wang D."/>
            <person name="Mitchell R.A.C."/>
            <person name="Shewry P.R."/>
        </authorList>
    </citation>
    <scope>NUCLEOTIDE SEQUENCE [MRNA]</scope>
    <scope>DEVELOPMENTAL STAGE</scope>
    <source>
        <strain>cv. Cadenza</strain>
    </source>
</reference>
<reference key="2">
    <citation type="journal article" date="2010" name="J. Cereal Sci.">
        <title>Isolation and characterization of Avenin-like protein type-B from durum wheat.</title>
        <authorList>
            <person name="De Caro S."/>
            <person name="Ferranti P."/>
            <person name="Addeo F."/>
            <person name="Mamone G."/>
        </authorList>
    </citation>
    <scope>PROTEIN SEQUENCE OF 19-40</scope>
    <scope>IDENTIFICATION BY MASS SPECTROMETRY</scope>
</reference>
<keyword id="KW-0903">Direct protein sequencing</keyword>
<keyword id="KW-1015">Disulfide bond</keyword>
<keyword id="KW-1185">Reference proteome</keyword>
<keyword id="KW-0708">Seed storage protein</keyword>
<keyword id="KW-0732">Signal</keyword>
<keyword id="KW-0758">Storage protein</keyword>
<evidence type="ECO:0000269" key="1">
    <source ref="1"/>
</evidence>
<evidence type="ECO:0000269" key="2">
    <source ref="2"/>
</evidence>
<evidence type="ECO:0000305" key="3"/>
<accession>Q2A783</accession>
<protein>
    <recommendedName>
        <fullName>Avenin-like b1</fullName>
        <shortName>TaAvlike-b1</shortName>
    </recommendedName>
</protein>
<feature type="signal peptide" evidence="2">
    <location>
        <begin position="1"/>
        <end position="18"/>
    </location>
</feature>
<feature type="chain" id="PRO_5000076741" description="Avenin-like b1">
    <location>
        <begin position="19"/>
        <end position="285"/>
    </location>
</feature>
<proteinExistence type="evidence at protein level"/>
<sequence length="285" mass="32727">MKVFILALLALTATTAIAQLETTCSQGFGQYQQQQQPGQRQLLEQMKPCVAFLQQQCRPLRMPFLQTQVEQLSSCQIVQHQCCQQLAQIPERIRCHAIHSVVEAIMQQQSQQQWQERQQQAQHKSMRMLLENLSLMCNIYVPVQCQQQQQMGQQQQQQQLQEQLTPCATFLQHQCSPVTVPFPQIPVDQPTSCQNVQHQCCRQLSQIPEQFRCQAIHNVAEAIRQQQPQQQWQGMYQPQQPAQHESIRMSLQALRSMCNIYIPVQCPAPTAYNIPMVATCTSGAC</sequence>
<comment type="function">
    <text>Seed storage protein. Might be integrated via inter-chain disulfide bonds within the glutenin polymer.</text>
</comment>
<comment type="developmental stage">
    <text evidence="1">Expressed in developing grains.</text>
</comment>
<comment type="PTM">
    <text evidence="3">Contains disulfide bonds.</text>
</comment>
<comment type="similarity">
    <text evidence="3">Belongs to the prolamin family.</text>
</comment>
<dbReference type="EMBL" id="AM087941">
    <property type="protein sequence ID" value="CAJ32655.1"/>
    <property type="molecule type" value="mRNA"/>
</dbReference>
<dbReference type="SMR" id="Q2A783"/>
<dbReference type="EnsemblPlants" id="TraesARI4A03G02247290.1">
    <property type="protein sequence ID" value="TraesARI4A03G02247290.1.CDS1"/>
    <property type="gene ID" value="TraesARI4A03G02247290"/>
</dbReference>
<dbReference type="EnsemblPlants" id="TraesCAD_scaffold_046369_01G000100.1">
    <property type="protein sequence ID" value="TraesCAD_scaffold_046369_01G000100.1"/>
    <property type="gene ID" value="TraesCAD_scaffold_046369_01G000100"/>
</dbReference>
<dbReference type="EnsemblPlants" id="TraesCLE_scaffold_118687_01G000100.1">
    <property type="protein sequence ID" value="TraesCLE_scaffold_118687_01G000100.1"/>
    <property type="gene ID" value="TraesCLE_scaffold_118687_01G000100"/>
</dbReference>
<dbReference type="EnsemblPlants" id="TraesCS4A02G453800.1">
    <property type="protein sequence ID" value="TraesCS4A02G453800.1.cds1"/>
    <property type="gene ID" value="TraesCS4A02G453800"/>
</dbReference>
<dbReference type="EnsemblPlants" id="TraesCS4A03G1135700.1">
    <property type="protein sequence ID" value="TraesCS4A03G1135700.1.CDS1"/>
    <property type="gene ID" value="TraesCS4A03G1135700"/>
</dbReference>
<dbReference type="EnsemblPlants" id="TraesJAGUn03G04533490.1">
    <property type="protein sequence ID" value="TraesJAGUn03G04533490.1.CDS1"/>
    <property type="gene ID" value="TraesJAGUn03G04533490"/>
</dbReference>
<dbReference type="EnsemblPlants" id="TraesJUL4A03G02229010.1">
    <property type="protein sequence ID" value="TraesJUL4A03G02229010.1.CDS1"/>
    <property type="gene ID" value="TraesJUL4A03G02229010"/>
</dbReference>
<dbReference type="EnsemblPlants" id="TraesKAR4A01G0466640.1">
    <property type="protein sequence ID" value="cds.TraesKAR4A01G0466640.1"/>
    <property type="gene ID" value="TraesKAR4A01G0466640"/>
</dbReference>
<dbReference type="EnsemblPlants" id="TraesLAC4A03G02162850.1">
    <property type="protein sequence ID" value="TraesLAC4A03G02162850.1.CDS1"/>
    <property type="gene ID" value="TraesLAC4A03G02162850"/>
</dbReference>
<dbReference type="EnsemblPlants" id="TraesMAC4A03G02206660.1">
    <property type="protein sequence ID" value="TraesMAC4A03G02206660.1.CDS1"/>
    <property type="gene ID" value="TraesMAC4A03G02206660"/>
</dbReference>
<dbReference type="EnsemblPlants" id="TraesRN4A0101179400.1">
    <property type="protein sequence ID" value="TraesRN4A0101179400.1"/>
    <property type="gene ID" value="TraesRN4A0101179400"/>
</dbReference>
<dbReference type="EnsemblPlants" id="TraesSTA4A03G02205430.1">
    <property type="protein sequence ID" value="TraesSTA4A03G02205430.1.CDS1"/>
    <property type="gene ID" value="TraesSTA4A03G02205430"/>
</dbReference>
<dbReference type="EnsemblPlants" id="TraesSYM4A03G02235930.1">
    <property type="protein sequence ID" value="TraesSYM4A03G02235930.1.CDS1"/>
    <property type="gene ID" value="TraesSYM4A03G02235930"/>
</dbReference>
<dbReference type="EnsemblPlants" id="TraesWEE_scaffold_082754_01G000100.1">
    <property type="protein sequence ID" value="TraesWEE_scaffold_082754_01G000100.1"/>
    <property type="gene ID" value="TraesWEE_scaffold_082754_01G000100"/>
</dbReference>
<dbReference type="Gramene" id="TraesARI4A03G02247290.1">
    <property type="protein sequence ID" value="TraesARI4A03G02247290.1.CDS1"/>
    <property type="gene ID" value="TraesARI4A03G02247290"/>
</dbReference>
<dbReference type="Gramene" id="TraesCAD_scaffold_046369_01G000100.1">
    <property type="protein sequence ID" value="TraesCAD_scaffold_046369_01G000100.1"/>
    <property type="gene ID" value="TraesCAD_scaffold_046369_01G000100"/>
</dbReference>
<dbReference type="Gramene" id="TraesCLE_scaffold_118687_01G000100.1">
    <property type="protein sequence ID" value="TraesCLE_scaffold_118687_01G000100.1"/>
    <property type="gene ID" value="TraesCLE_scaffold_118687_01G000100"/>
</dbReference>
<dbReference type="Gramene" id="TraesCS4A02G453800.1">
    <property type="protein sequence ID" value="TraesCS4A02G453800.1.cds1"/>
    <property type="gene ID" value="TraesCS4A02G453800"/>
</dbReference>
<dbReference type="Gramene" id="TraesCS4A03G1135700.1">
    <property type="protein sequence ID" value="TraesCS4A03G1135700.1.CDS1"/>
    <property type="gene ID" value="TraesCS4A03G1135700"/>
</dbReference>
<dbReference type="Gramene" id="TraesJAGUn03G04533490.1">
    <property type="protein sequence ID" value="TraesJAGUn03G04533490.1.CDS1"/>
    <property type="gene ID" value="TraesJAGUn03G04533490"/>
</dbReference>
<dbReference type="Gramene" id="TraesJUL4A03G02229010.1">
    <property type="protein sequence ID" value="TraesJUL4A03G02229010.1.CDS1"/>
    <property type="gene ID" value="TraesJUL4A03G02229010"/>
</dbReference>
<dbReference type="Gramene" id="TraesKAR4A01G0466640.1">
    <property type="protein sequence ID" value="cds.TraesKAR4A01G0466640.1"/>
    <property type="gene ID" value="TraesKAR4A01G0466640"/>
</dbReference>
<dbReference type="Gramene" id="TraesLAC4A03G02162850.1">
    <property type="protein sequence ID" value="TraesLAC4A03G02162850.1.CDS1"/>
    <property type="gene ID" value="TraesLAC4A03G02162850"/>
</dbReference>
<dbReference type="Gramene" id="TraesMAC4A03G02206660.1">
    <property type="protein sequence ID" value="TraesMAC4A03G02206660.1.CDS1"/>
    <property type="gene ID" value="TraesMAC4A03G02206660"/>
</dbReference>
<dbReference type="Gramene" id="TraesRN4A0101179400.1">
    <property type="protein sequence ID" value="TraesRN4A0101179400.1"/>
    <property type="gene ID" value="TraesRN4A0101179400"/>
</dbReference>
<dbReference type="Gramene" id="TraesSTA4A03G02205430.1">
    <property type="protein sequence ID" value="TraesSTA4A03G02205430.1.CDS1"/>
    <property type="gene ID" value="TraesSTA4A03G02205430"/>
</dbReference>
<dbReference type="Gramene" id="TraesSYM4A03G02235930.1">
    <property type="protein sequence ID" value="TraesSYM4A03G02235930.1.CDS1"/>
    <property type="gene ID" value="TraesSYM4A03G02235930"/>
</dbReference>
<dbReference type="Gramene" id="TraesWEE_scaffold_082754_01G000100.1">
    <property type="protein sequence ID" value="TraesWEE_scaffold_082754_01G000100.1"/>
    <property type="gene ID" value="TraesWEE_scaffold_082754_01G000100"/>
</dbReference>
<dbReference type="OMA" id="INSCNEF"/>
<dbReference type="OrthoDB" id="692815at2759"/>
<dbReference type="Proteomes" id="UP000019116">
    <property type="component" value="Chromosome 4A"/>
</dbReference>
<dbReference type="ExpressionAtlas" id="Q2A783">
    <property type="expression patterns" value="baseline and differential"/>
</dbReference>
<dbReference type="GO" id="GO:0045735">
    <property type="term" value="F:nutrient reservoir activity"/>
    <property type="evidence" value="ECO:0007669"/>
    <property type="project" value="UniProtKB-KW"/>
</dbReference>
<dbReference type="CDD" id="cd00261">
    <property type="entry name" value="AAI_SS"/>
    <property type="match status" value="2"/>
</dbReference>
<dbReference type="Gene3D" id="1.10.110.10">
    <property type="entry name" value="Plant lipid-transfer and hydrophobic proteins"/>
    <property type="match status" value="2"/>
</dbReference>
<dbReference type="InterPro" id="IPR036312">
    <property type="entry name" value="Bifun_inhib/LTP/seed_sf"/>
</dbReference>
<dbReference type="InterPro" id="IPR016140">
    <property type="entry name" value="Bifunc_inhib/LTP/seed_store"/>
</dbReference>
<dbReference type="InterPro" id="IPR001954">
    <property type="entry name" value="Glia_glutenin"/>
</dbReference>
<dbReference type="PANTHER" id="PTHR33454:SF11">
    <property type="entry name" value="AVENIN-LIKE B5"/>
    <property type="match status" value="1"/>
</dbReference>
<dbReference type="PANTHER" id="PTHR33454">
    <property type="entry name" value="PROLAMIN PPROL 14P"/>
    <property type="match status" value="1"/>
</dbReference>
<dbReference type="Pfam" id="PF13016">
    <property type="entry name" value="Gliadin"/>
    <property type="match status" value="2"/>
</dbReference>
<dbReference type="PRINTS" id="PR00208">
    <property type="entry name" value="GLIADGLUTEN"/>
</dbReference>
<dbReference type="PRINTS" id="PR00209">
    <property type="entry name" value="GLIADIN"/>
</dbReference>
<dbReference type="SMART" id="SM00499">
    <property type="entry name" value="AAI"/>
    <property type="match status" value="2"/>
</dbReference>
<dbReference type="SUPFAM" id="SSF47699">
    <property type="entry name" value="Bifunctional inhibitor/lipid-transfer protein/seed storage 2S albumin"/>
    <property type="match status" value="2"/>
</dbReference>
<gene>
    <name type="primary">AVNLB</name>
</gene>
<organism>
    <name type="scientific">Triticum aestivum</name>
    <name type="common">Wheat</name>
    <dbReference type="NCBI Taxonomy" id="4565"/>
    <lineage>
        <taxon>Eukaryota</taxon>
        <taxon>Viridiplantae</taxon>
        <taxon>Streptophyta</taxon>
        <taxon>Embryophyta</taxon>
        <taxon>Tracheophyta</taxon>
        <taxon>Spermatophyta</taxon>
        <taxon>Magnoliopsida</taxon>
        <taxon>Liliopsida</taxon>
        <taxon>Poales</taxon>
        <taxon>Poaceae</taxon>
        <taxon>BOP clade</taxon>
        <taxon>Pooideae</taxon>
        <taxon>Triticodae</taxon>
        <taxon>Triticeae</taxon>
        <taxon>Triticinae</taxon>
        <taxon>Triticum</taxon>
    </lineage>
</organism>